<protein>
    <recommendedName>
        <fullName evidence="1">4-diphosphocytidyl-2-C-methyl-D-erythritol kinase</fullName>
        <shortName evidence="1">CMK</shortName>
        <ecNumber evidence="1">2.7.1.148</ecNumber>
    </recommendedName>
    <alternativeName>
        <fullName evidence="1">4-(cytidine-5'-diphospho)-2-C-methyl-D-erythritol kinase</fullName>
    </alternativeName>
</protein>
<reference key="1">
    <citation type="submission" date="2008-07" db="EMBL/GenBank/DDBJ databases">
        <title>Complete sequence of Geobacter bemidjiensis BEM.</title>
        <authorList>
            <consortium name="US DOE Joint Genome Institute"/>
            <person name="Lucas S."/>
            <person name="Copeland A."/>
            <person name="Lapidus A."/>
            <person name="Glavina del Rio T."/>
            <person name="Dalin E."/>
            <person name="Tice H."/>
            <person name="Bruce D."/>
            <person name="Goodwin L."/>
            <person name="Pitluck S."/>
            <person name="Kiss H."/>
            <person name="Brettin T."/>
            <person name="Detter J.C."/>
            <person name="Han C."/>
            <person name="Kuske C.R."/>
            <person name="Schmutz J."/>
            <person name="Larimer F."/>
            <person name="Land M."/>
            <person name="Hauser L."/>
            <person name="Kyrpides N."/>
            <person name="Lykidis A."/>
            <person name="Lovley D."/>
            <person name="Richardson P."/>
        </authorList>
    </citation>
    <scope>NUCLEOTIDE SEQUENCE [LARGE SCALE GENOMIC DNA]</scope>
    <source>
        <strain>ATCC BAA-1014 / DSM 16622 / JCM 12645 / Bem</strain>
    </source>
</reference>
<name>ISPE_CITBB</name>
<sequence length="280" mass="29931">MKKLQLLAPAKVNYRLDVLGKRPDGYHELRMIMQRVDLCDEIEIALSDSPGIRVTCGRKGVPDGPGNIAWRAADALLKLSDKEVGIEITIAKKIPVGAGLGGGSSDAATVLMGVNELLELGLTDERLMEIGVKLGADVPFFVFKKPALAEGIGDRLTALEEVPSLWVVLVNPGIHVSTAWVYQNLRLTTPDPATIIPRSYSSLNEVCELLSNDLEPVTCGRFPLVSELKEVLLTAGARGSLMSGSGSTVFGLFESESAARHAAAEIAKARGWFAAAVRTI</sequence>
<dbReference type="EC" id="2.7.1.148" evidence="1"/>
<dbReference type="EMBL" id="CP001124">
    <property type="protein sequence ID" value="ACH39779.1"/>
    <property type="molecule type" value="Genomic_DNA"/>
</dbReference>
<dbReference type="RefSeq" id="WP_012531205.1">
    <property type="nucleotide sequence ID" value="NC_011146.1"/>
</dbReference>
<dbReference type="SMR" id="B5EHY0"/>
<dbReference type="STRING" id="404380.Gbem_2775"/>
<dbReference type="KEGG" id="gbm:Gbem_2775"/>
<dbReference type="eggNOG" id="COG1947">
    <property type="taxonomic scope" value="Bacteria"/>
</dbReference>
<dbReference type="HOGENOM" id="CLU_053057_1_1_7"/>
<dbReference type="OrthoDB" id="9809438at2"/>
<dbReference type="UniPathway" id="UPA00056">
    <property type="reaction ID" value="UER00094"/>
</dbReference>
<dbReference type="Proteomes" id="UP000008825">
    <property type="component" value="Chromosome"/>
</dbReference>
<dbReference type="GO" id="GO:0050515">
    <property type="term" value="F:4-(cytidine 5'-diphospho)-2-C-methyl-D-erythritol kinase activity"/>
    <property type="evidence" value="ECO:0007669"/>
    <property type="project" value="UniProtKB-UniRule"/>
</dbReference>
<dbReference type="GO" id="GO:0005524">
    <property type="term" value="F:ATP binding"/>
    <property type="evidence" value="ECO:0007669"/>
    <property type="project" value="UniProtKB-UniRule"/>
</dbReference>
<dbReference type="GO" id="GO:0019288">
    <property type="term" value="P:isopentenyl diphosphate biosynthetic process, methylerythritol 4-phosphate pathway"/>
    <property type="evidence" value="ECO:0007669"/>
    <property type="project" value="UniProtKB-UniRule"/>
</dbReference>
<dbReference type="GO" id="GO:0016114">
    <property type="term" value="P:terpenoid biosynthetic process"/>
    <property type="evidence" value="ECO:0007669"/>
    <property type="project" value="InterPro"/>
</dbReference>
<dbReference type="Gene3D" id="3.30.230.10">
    <property type="match status" value="1"/>
</dbReference>
<dbReference type="Gene3D" id="3.30.70.890">
    <property type="entry name" value="GHMP kinase, C-terminal domain"/>
    <property type="match status" value="1"/>
</dbReference>
<dbReference type="HAMAP" id="MF_00061">
    <property type="entry name" value="IspE"/>
    <property type="match status" value="1"/>
</dbReference>
<dbReference type="InterPro" id="IPR013750">
    <property type="entry name" value="GHMP_kinase_C_dom"/>
</dbReference>
<dbReference type="InterPro" id="IPR036554">
    <property type="entry name" value="GHMP_kinase_C_sf"/>
</dbReference>
<dbReference type="InterPro" id="IPR006204">
    <property type="entry name" value="GHMP_kinase_N_dom"/>
</dbReference>
<dbReference type="InterPro" id="IPR004424">
    <property type="entry name" value="IspE"/>
</dbReference>
<dbReference type="InterPro" id="IPR020568">
    <property type="entry name" value="Ribosomal_Su5_D2-typ_SF"/>
</dbReference>
<dbReference type="InterPro" id="IPR014721">
    <property type="entry name" value="Ribsml_uS5_D2-typ_fold_subgr"/>
</dbReference>
<dbReference type="NCBIfam" id="TIGR00154">
    <property type="entry name" value="ispE"/>
    <property type="match status" value="1"/>
</dbReference>
<dbReference type="NCBIfam" id="NF011202">
    <property type="entry name" value="PRK14608.1"/>
    <property type="match status" value="1"/>
</dbReference>
<dbReference type="PANTHER" id="PTHR43527">
    <property type="entry name" value="4-DIPHOSPHOCYTIDYL-2-C-METHYL-D-ERYTHRITOL KINASE, CHLOROPLASTIC"/>
    <property type="match status" value="1"/>
</dbReference>
<dbReference type="PANTHER" id="PTHR43527:SF2">
    <property type="entry name" value="4-DIPHOSPHOCYTIDYL-2-C-METHYL-D-ERYTHRITOL KINASE, CHLOROPLASTIC"/>
    <property type="match status" value="1"/>
</dbReference>
<dbReference type="Pfam" id="PF08544">
    <property type="entry name" value="GHMP_kinases_C"/>
    <property type="match status" value="1"/>
</dbReference>
<dbReference type="Pfam" id="PF00288">
    <property type="entry name" value="GHMP_kinases_N"/>
    <property type="match status" value="1"/>
</dbReference>
<dbReference type="PIRSF" id="PIRSF010376">
    <property type="entry name" value="IspE"/>
    <property type="match status" value="1"/>
</dbReference>
<dbReference type="SUPFAM" id="SSF55060">
    <property type="entry name" value="GHMP Kinase, C-terminal domain"/>
    <property type="match status" value="1"/>
</dbReference>
<dbReference type="SUPFAM" id="SSF54211">
    <property type="entry name" value="Ribosomal protein S5 domain 2-like"/>
    <property type="match status" value="1"/>
</dbReference>
<keyword id="KW-0067">ATP-binding</keyword>
<keyword id="KW-0414">Isoprene biosynthesis</keyword>
<keyword id="KW-0418">Kinase</keyword>
<keyword id="KW-0547">Nucleotide-binding</keyword>
<keyword id="KW-1185">Reference proteome</keyword>
<keyword id="KW-0808">Transferase</keyword>
<evidence type="ECO:0000255" key="1">
    <source>
        <dbReference type="HAMAP-Rule" id="MF_00061"/>
    </source>
</evidence>
<organism>
    <name type="scientific">Citrifermentans bemidjiense (strain ATCC BAA-1014 / DSM 16622 / JCM 12645 / Bem)</name>
    <name type="common">Geobacter bemidjiensis</name>
    <dbReference type="NCBI Taxonomy" id="404380"/>
    <lineage>
        <taxon>Bacteria</taxon>
        <taxon>Pseudomonadati</taxon>
        <taxon>Thermodesulfobacteriota</taxon>
        <taxon>Desulfuromonadia</taxon>
        <taxon>Geobacterales</taxon>
        <taxon>Geobacteraceae</taxon>
        <taxon>Citrifermentans</taxon>
    </lineage>
</organism>
<gene>
    <name evidence="1" type="primary">ispE</name>
    <name type="ordered locus">Gbem_2775</name>
</gene>
<feature type="chain" id="PRO_1000092089" description="4-diphosphocytidyl-2-C-methyl-D-erythritol kinase">
    <location>
        <begin position="1"/>
        <end position="280"/>
    </location>
</feature>
<feature type="active site" evidence="1">
    <location>
        <position position="11"/>
    </location>
</feature>
<feature type="active site" evidence="1">
    <location>
        <position position="137"/>
    </location>
</feature>
<feature type="binding site" evidence="1">
    <location>
        <begin position="95"/>
        <end position="105"/>
    </location>
    <ligand>
        <name>ATP</name>
        <dbReference type="ChEBI" id="CHEBI:30616"/>
    </ligand>
</feature>
<accession>B5EHY0</accession>
<proteinExistence type="inferred from homology"/>
<comment type="function">
    <text evidence="1">Catalyzes the phosphorylation of the position 2 hydroxy group of 4-diphosphocytidyl-2C-methyl-D-erythritol.</text>
</comment>
<comment type="catalytic activity">
    <reaction evidence="1">
        <text>4-CDP-2-C-methyl-D-erythritol + ATP = 4-CDP-2-C-methyl-D-erythritol 2-phosphate + ADP + H(+)</text>
        <dbReference type="Rhea" id="RHEA:18437"/>
        <dbReference type="ChEBI" id="CHEBI:15378"/>
        <dbReference type="ChEBI" id="CHEBI:30616"/>
        <dbReference type="ChEBI" id="CHEBI:57823"/>
        <dbReference type="ChEBI" id="CHEBI:57919"/>
        <dbReference type="ChEBI" id="CHEBI:456216"/>
        <dbReference type="EC" id="2.7.1.148"/>
    </reaction>
</comment>
<comment type="pathway">
    <text evidence="1">Isoprenoid biosynthesis; isopentenyl diphosphate biosynthesis via DXP pathway; isopentenyl diphosphate from 1-deoxy-D-xylulose 5-phosphate: step 3/6.</text>
</comment>
<comment type="similarity">
    <text evidence="1">Belongs to the GHMP kinase family. IspE subfamily.</text>
</comment>